<reference key="1">
    <citation type="journal article" date="2004" name="Nature">
        <title>Genome evolution in yeasts.</title>
        <authorList>
            <person name="Dujon B."/>
            <person name="Sherman D."/>
            <person name="Fischer G."/>
            <person name="Durrens P."/>
            <person name="Casaregola S."/>
            <person name="Lafontaine I."/>
            <person name="de Montigny J."/>
            <person name="Marck C."/>
            <person name="Neuveglise C."/>
            <person name="Talla E."/>
            <person name="Goffard N."/>
            <person name="Frangeul L."/>
            <person name="Aigle M."/>
            <person name="Anthouard V."/>
            <person name="Babour A."/>
            <person name="Barbe V."/>
            <person name="Barnay S."/>
            <person name="Blanchin S."/>
            <person name="Beckerich J.-M."/>
            <person name="Beyne E."/>
            <person name="Bleykasten C."/>
            <person name="Boisrame A."/>
            <person name="Boyer J."/>
            <person name="Cattolico L."/>
            <person name="Confanioleri F."/>
            <person name="de Daruvar A."/>
            <person name="Despons L."/>
            <person name="Fabre E."/>
            <person name="Fairhead C."/>
            <person name="Ferry-Dumazet H."/>
            <person name="Groppi A."/>
            <person name="Hantraye F."/>
            <person name="Hennequin C."/>
            <person name="Jauniaux N."/>
            <person name="Joyet P."/>
            <person name="Kachouri R."/>
            <person name="Kerrest A."/>
            <person name="Koszul R."/>
            <person name="Lemaire M."/>
            <person name="Lesur I."/>
            <person name="Ma L."/>
            <person name="Muller H."/>
            <person name="Nicaud J.-M."/>
            <person name="Nikolski M."/>
            <person name="Oztas S."/>
            <person name="Ozier-Kalogeropoulos O."/>
            <person name="Pellenz S."/>
            <person name="Potier S."/>
            <person name="Richard G.-F."/>
            <person name="Straub M.-L."/>
            <person name="Suleau A."/>
            <person name="Swennen D."/>
            <person name="Tekaia F."/>
            <person name="Wesolowski-Louvel M."/>
            <person name="Westhof E."/>
            <person name="Wirth B."/>
            <person name="Zeniou-Meyer M."/>
            <person name="Zivanovic Y."/>
            <person name="Bolotin-Fukuhara M."/>
            <person name="Thierry A."/>
            <person name="Bouchier C."/>
            <person name="Caudron B."/>
            <person name="Scarpelli C."/>
            <person name="Gaillardin C."/>
            <person name="Weissenbach J."/>
            <person name="Wincker P."/>
            <person name="Souciet J.-L."/>
        </authorList>
    </citation>
    <scope>NUCLEOTIDE SEQUENCE [LARGE SCALE GENOMIC DNA]</scope>
    <source>
        <strain>ATCC 36239 / CBS 767 / BCRC 21394 / JCM 1990 / NBRC 0083 / IGC 2968</strain>
    </source>
</reference>
<sequence>MSSPMPQSSLNNSQVANMIDESNETPSTTPPMISNTNTPVPEIEMEEPNAPQDNTVAPNSIDGEKVQEENEDDDEQEEEEEEEEEEEESLSLPLSKIKKIFKMDPDYLAASQSAVYATGLATELFIQYFTEQSLVLAKMDKRKKLQYKDFSNAVASQDSLNFLSDTVPKTQPIGELINSKKVNVNSHDNNEIREIDNTEIDEIEVDEPVNATRKVKPLAKGQQTLNFSATNTATESINPMPIKKSVISDIVTTDNETEVTSKEATEEVEDQDVIMIN</sequence>
<feature type="chain" id="PRO_0000208346" description="DNA polymerase epsilon subunit C">
    <location>
        <begin position="1"/>
        <end position="277"/>
    </location>
</feature>
<feature type="region of interest" description="Disordered" evidence="3">
    <location>
        <begin position="1"/>
        <end position="91"/>
    </location>
</feature>
<feature type="compositionally biased region" description="Polar residues" evidence="3">
    <location>
        <begin position="1"/>
        <end position="16"/>
    </location>
</feature>
<feature type="compositionally biased region" description="Polar residues" evidence="3">
    <location>
        <begin position="24"/>
        <end position="39"/>
    </location>
</feature>
<feature type="compositionally biased region" description="Acidic residues" evidence="3">
    <location>
        <begin position="69"/>
        <end position="89"/>
    </location>
</feature>
<protein>
    <recommendedName>
        <fullName>DNA polymerase epsilon subunit C</fullName>
    </recommendedName>
    <alternativeName>
        <fullName>DNA polymerase II subunit C</fullName>
    </alternativeName>
</protein>
<keyword id="KW-0235">DNA replication</keyword>
<keyword id="KW-0539">Nucleus</keyword>
<keyword id="KW-1185">Reference proteome</keyword>
<evidence type="ECO:0000250" key="1"/>
<evidence type="ECO:0000250" key="2">
    <source>
        <dbReference type="UniProtKB" id="P27344"/>
    </source>
</evidence>
<evidence type="ECO:0000256" key="3">
    <source>
        <dbReference type="SAM" id="MobiDB-lite"/>
    </source>
</evidence>
<comment type="function">
    <text evidence="2">As accessory component of the DNA polymerase epsilon (DNA polymerase II) participates in chromosomal DNA replication.</text>
</comment>
<comment type="subunit">
    <text evidence="1">Heterotetramer. Consists of four subunits: POL2, DPB2, DPB3 and DPB4 (By similarity).</text>
</comment>
<comment type="subcellular location">
    <subcellularLocation>
        <location evidence="1">Nucleus</location>
    </subcellularLocation>
</comment>
<comment type="miscellaneous">
    <text>In eukaryotes there are five DNA polymerases: alpha, beta, gamma, delta, and epsilon which are responsible for different reactions of DNA synthesis.</text>
</comment>
<organism>
    <name type="scientific">Debaryomyces hansenii (strain ATCC 36239 / CBS 767 / BCRC 21394 / JCM 1990 / NBRC 0083 / IGC 2968)</name>
    <name type="common">Yeast</name>
    <name type="synonym">Torulaspora hansenii</name>
    <dbReference type="NCBI Taxonomy" id="284592"/>
    <lineage>
        <taxon>Eukaryota</taxon>
        <taxon>Fungi</taxon>
        <taxon>Dikarya</taxon>
        <taxon>Ascomycota</taxon>
        <taxon>Saccharomycotina</taxon>
        <taxon>Pichiomycetes</taxon>
        <taxon>Debaryomycetaceae</taxon>
        <taxon>Debaryomyces</taxon>
    </lineage>
</organism>
<gene>
    <name type="primary">DPB3</name>
    <name type="ordered locus">DEHA2B06820g</name>
</gene>
<accession>Q6BX14</accession>
<proteinExistence type="inferred from homology"/>
<name>DPB3_DEBHA</name>
<dbReference type="EMBL" id="CR382134">
    <property type="protein sequence ID" value="CAG85253.1"/>
    <property type="molecule type" value="Genomic_DNA"/>
</dbReference>
<dbReference type="RefSeq" id="XP_457255.1">
    <property type="nucleotide sequence ID" value="XM_457255.1"/>
</dbReference>
<dbReference type="SMR" id="Q6BX14"/>
<dbReference type="STRING" id="284592.Q6BX14"/>
<dbReference type="GeneID" id="2913719"/>
<dbReference type="KEGG" id="dha:DEHA2B06820g"/>
<dbReference type="eggNOG" id="KOG1658">
    <property type="taxonomic scope" value="Eukaryota"/>
</dbReference>
<dbReference type="HOGENOM" id="CLU_084533_0_0_1"/>
<dbReference type="InParanoid" id="Q6BX14"/>
<dbReference type="OMA" id="HEGENDQ"/>
<dbReference type="OrthoDB" id="636685at2759"/>
<dbReference type="Proteomes" id="UP000000599">
    <property type="component" value="Chromosome B"/>
</dbReference>
<dbReference type="GO" id="GO:0008623">
    <property type="term" value="C:CHRAC"/>
    <property type="evidence" value="ECO:0007669"/>
    <property type="project" value="TreeGrafter"/>
</dbReference>
<dbReference type="GO" id="GO:0046982">
    <property type="term" value="F:protein heterodimerization activity"/>
    <property type="evidence" value="ECO:0007669"/>
    <property type="project" value="InterPro"/>
</dbReference>
<dbReference type="GO" id="GO:0006261">
    <property type="term" value="P:DNA-templated DNA replication"/>
    <property type="evidence" value="ECO:0007669"/>
    <property type="project" value="TreeGrafter"/>
</dbReference>
<dbReference type="CDD" id="cd22929">
    <property type="entry name" value="HFD_POLE4-like"/>
    <property type="match status" value="1"/>
</dbReference>
<dbReference type="Gene3D" id="1.10.20.10">
    <property type="entry name" value="Histone, subunit A"/>
    <property type="match status" value="1"/>
</dbReference>
<dbReference type="InterPro" id="IPR003958">
    <property type="entry name" value="CBFA_NFYB_domain"/>
</dbReference>
<dbReference type="InterPro" id="IPR009072">
    <property type="entry name" value="Histone-fold"/>
</dbReference>
<dbReference type="InterPro" id="IPR050568">
    <property type="entry name" value="Transcr_DNA_Rep_Reg"/>
</dbReference>
<dbReference type="PANTHER" id="PTHR10252:SF151">
    <property type="entry name" value="DNA POLYMERASE EPSILON NONCATALYTIC SUBUNIT"/>
    <property type="match status" value="1"/>
</dbReference>
<dbReference type="PANTHER" id="PTHR10252">
    <property type="entry name" value="HISTONE-LIKE TRANSCRIPTION FACTOR CCAAT-RELATED"/>
    <property type="match status" value="1"/>
</dbReference>
<dbReference type="Pfam" id="PF00808">
    <property type="entry name" value="CBFD_NFYB_HMF"/>
    <property type="match status" value="1"/>
</dbReference>
<dbReference type="SUPFAM" id="SSF47113">
    <property type="entry name" value="Histone-fold"/>
    <property type="match status" value="1"/>
</dbReference>